<dbReference type="EC" id="1.5.1.5" evidence="1"/>
<dbReference type="EC" id="3.5.4.9" evidence="1"/>
<dbReference type="EMBL" id="AM920689">
    <property type="protein sequence ID" value="CAP51348.1"/>
    <property type="molecule type" value="Genomic_DNA"/>
</dbReference>
<dbReference type="SMR" id="B0RSB3"/>
<dbReference type="KEGG" id="xca:xcc-b100_1995"/>
<dbReference type="HOGENOM" id="CLU_034045_2_1_6"/>
<dbReference type="UniPathway" id="UPA00193"/>
<dbReference type="Proteomes" id="UP000001188">
    <property type="component" value="Chromosome"/>
</dbReference>
<dbReference type="GO" id="GO:0005829">
    <property type="term" value="C:cytosol"/>
    <property type="evidence" value="ECO:0007669"/>
    <property type="project" value="TreeGrafter"/>
</dbReference>
<dbReference type="GO" id="GO:0004477">
    <property type="term" value="F:methenyltetrahydrofolate cyclohydrolase activity"/>
    <property type="evidence" value="ECO:0007669"/>
    <property type="project" value="UniProtKB-UniRule"/>
</dbReference>
<dbReference type="GO" id="GO:0004488">
    <property type="term" value="F:methylenetetrahydrofolate dehydrogenase (NADP+) activity"/>
    <property type="evidence" value="ECO:0007669"/>
    <property type="project" value="UniProtKB-UniRule"/>
</dbReference>
<dbReference type="GO" id="GO:0000105">
    <property type="term" value="P:L-histidine biosynthetic process"/>
    <property type="evidence" value="ECO:0007669"/>
    <property type="project" value="UniProtKB-KW"/>
</dbReference>
<dbReference type="GO" id="GO:0009086">
    <property type="term" value="P:methionine biosynthetic process"/>
    <property type="evidence" value="ECO:0007669"/>
    <property type="project" value="UniProtKB-KW"/>
</dbReference>
<dbReference type="GO" id="GO:0006164">
    <property type="term" value="P:purine nucleotide biosynthetic process"/>
    <property type="evidence" value="ECO:0007669"/>
    <property type="project" value="UniProtKB-KW"/>
</dbReference>
<dbReference type="GO" id="GO:0035999">
    <property type="term" value="P:tetrahydrofolate interconversion"/>
    <property type="evidence" value="ECO:0007669"/>
    <property type="project" value="UniProtKB-UniRule"/>
</dbReference>
<dbReference type="CDD" id="cd01080">
    <property type="entry name" value="NAD_bind_m-THF_DH_Cyclohyd"/>
    <property type="match status" value="1"/>
</dbReference>
<dbReference type="FunFam" id="3.40.50.720:FF:000006">
    <property type="entry name" value="Bifunctional protein FolD"/>
    <property type="match status" value="1"/>
</dbReference>
<dbReference type="FunFam" id="3.40.50.10860:FF:000005">
    <property type="entry name" value="C-1-tetrahydrofolate synthase, cytoplasmic, putative"/>
    <property type="match status" value="1"/>
</dbReference>
<dbReference type="Gene3D" id="3.40.50.10860">
    <property type="entry name" value="Leucine Dehydrogenase, chain A, domain 1"/>
    <property type="match status" value="1"/>
</dbReference>
<dbReference type="Gene3D" id="3.40.50.720">
    <property type="entry name" value="NAD(P)-binding Rossmann-like Domain"/>
    <property type="match status" value="1"/>
</dbReference>
<dbReference type="HAMAP" id="MF_01576">
    <property type="entry name" value="THF_DHG_CYH"/>
    <property type="match status" value="1"/>
</dbReference>
<dbReference type="InterPro" id="IPR046346">
    <property type="entry name" value="Aminoacid_DH-like_N_sf"/>
</dbReference>
<dbReference type="InterPro" id="IPR036291">
    <property type="entry name" value="NAD(P)-bd_dom_sf"/>
</dbReference>
<dbReference type="InterPro" id="IPR000672">
    <property type="entry name" value="THF_DH/CycHdrlase"/>
</dbReference>
<dbReference type="InterPro" id="IPR020630">
    <property type="entry name" value="THF_DH/CycHdrlase_cat_dom"/>
</dbReference>
<dbReference type="InterPro" id="IPR020867">
    <property type="entry name" value="THF_DH/CycHdrlase_CS"/>
</dbReference>
<dbReference type="InterPro" id="IPR020631">
    <property type="entry name" value="THF_DH/CycHdrlase_NAD-bd_dom"/>
</dbReference>
<dbReference type="NCBIfam" id="NF008058">
    <property type="entry name" value="PRK10792.1"/>
    <property type="match status" value="1"/>
</dbReference>
<dbReference type="PANTHER" id="PTHR48099:SF5">
    <property type="entry name" value="C-1-TETRAHYDROFOLATE SYNTHASE, CYTOPLASMIC"/>
    <property type="match status" value="1"/>
</dbReference>
<dbReference type="PANTHER" id="PTHR48099">
    <property type="entry name" value="C-1-TETRAHYDROFOLATE SYNTHASE, CYTOPLASMIC-RELATED"/>
    <property type="match status" value="1"/>
</dbReference>
<dbReference type="Pfam" id="PF00763">
    <property type="entry name" value="THF_DHG_CYH"/>
    <property type="match status" value="1"/>
</dbReference>
<dbReference type="Pfam" id="PF02882">
    <property type="entry name" value="THF_DHG_CYH_C"/>
    <property type="match status" value="1"/>
</dbReference>
<dbReference type="PRINTS" id="PR00085">
    <property type="entry name" value="THFDHDRGNASE"/>
</dbReference>
<dbReference type="SUPFAM" id="SSF53223">
    <property type="entry name" value="Aminoacid dehydrogenase-like, N-terminal domain"/>
    <property type="match status" value="1"/>
</dbReference>
<dbReference type="SUPFAM" id="SSF51735">
    <property type="entry name" value="NAD(P)-binding Rossmann-fold domains"/>
    <property type="match status" value="1"/>
</dbReference>
<dbReference type="PROSITE" id="PS00767">
    <property type="entry name" value="THF_DHG_CYH_2"/>
    <property type="match status" value="1"/>
</dbReference>
<name>FOLD_XANCB</name>
<proteinExistence type="inferred from homology"/>
<evidence type="ECO:0000255" key="1">
    <source>
        <dbReference type="HAMAP-Rule" id="MF_01576"/>
    </source>
</evidence>
<sequence length="294" mass="30932">MTAPAPAALAPARLLDGRRIAEELLDGLKLRVDARLAAGKTRPGLAVVLVGGDPASSVYVRNKRRAAEKVGIEAFDYDLPQGTTEAELAALIDQLNTDPKIHGILIQLPLPGIPDANRLIQRIDPRKDVDGFHPQNVGHLALREFGLRPCTPRGIVTLLAHTDQPVRGRNATIVGVSNHVGRPMGLELLIAGCTVTSCHKFTPPDVLEASVRNADILVVAVGRPGLIPGEWVKPGAVVIDVGINRLDDGRLVGDVGFEAAAQRAGWITPVPGGVGPMTVATLMQNTLEAADAAG</sequence>
<organism>
    <name type="scientific">Xanthomonas campestris pv. campestris (strain B100)</name>
    <dbReference type="NCBI Taxonomy" id="509169"/>
    <lineage>
        <taxon>Bacteria</taxon>
        <taxon>Pseudomonadati</taxon>
        <taxon>Pseudomonadota</taxon>
        <taxon>Gammaproteobacteria</taxon>
        <taxon>Lysobacterales</taxon>
        <taxon>Lysobacteraceae</taxon>
        <taxon>Xanthomonas</taxon>
    </lineage>
</organism>
<accession>B0RSB3</accession>
<comment type="function">
    <text evidence="1">Catalyzes the oxidation of 5,10-methylenetetrahydrofolate to 5,10-methenyltetrahydrofolate and then the hydrolysis of 5,10-methenyltetrahydrofolate to 10-formyltetrahydrofolate.</text>
</comment>
<comment type="catalytic activity">
    <reaction evidence="1">
        <text>(6R)-5,10-methylene-5,6,7,8-tetrahydrofolate + NADP(+) = (6R)-5,10-methenyltetrahydrofolate + NADPH</text>
        <dbReference type="Rhea" id="RHEA:22812"/>
        <dbReference type="ChEBI" id="CHEBI:15636"/>
        <dbReference type="ChEBI" id="CHEBI:57455"/>
        <dbReference type="ChEBI" id="CHEBI:57783"/>
        <dbReference type="ChEBI" id="CHEBI:58349"/>
        <dbReference type="EC" id="1.5.1.5"/>
    </reaction>
</comment>
<comment type="catalytic activity">
    <reaction evidence="1">
        <text>(6R)-5,10-methenyltetrahydrofolate + H2O = (6R)-10-formyltetrahydrofolate + H(+)</text>
        <dbReference type="Rhea" id="RHEA:23700"/>
        <dbReference type="ChEBI" id="CHEBI:15377"/>
        <dbReference type="ChEBI" id="CHEBI:15378"/>
        <dbReference type="ChEBI" id="CHEBI:57455"/>
        <dbReference type="ChEBI" id="CHEBI:195366"/>
        <dbReference type="EC" id="3.5.4.9"/>
    </reaction>
</comment>
<comment type="pathway">
    <text evidence="1">One-carbon metabolism; tetrahydrofolate interconversion.</text>
</comment>
<comment type="subunit">
    <text evidence="1">Homodimer.</text>
</comment>
<comment type="similarity">
    <text evidence="1">Belongs to the tetrahydrofolate dehydrogenase/cyclohydrolase family.</text>
</comment>
<feature type="chain" id="PRO_0000340603" description="Bifunctional protein FolD">
    <location>
        <begin position="1"/>
        <end position="294"/>
    </location>
</feature>
<feature type="binding site" evidence="1">
    <location>
        <begin position="175"/>
        <end position="177"/>
    </location>
    <ligand>
        <name>NADP(+)</name>
        <dbReference type="ChEBI" id="CHEBI:58349"/>
    </ligand>
</feature>
<feature type="binding site" evidence="1">
    <location>
        <position position="243"/>
    </location>
    <ligand>
        <name>NADP(+)</name>
        <dbReference type="ChEBI" id="CHEBI:58349"/>
    </ligand>
</feature>
<gene>
    <name evidence="1" type="primary">folD</name>
    <name type="ordered locus">xcc-b100_1995</name>
</gene>
<keyword id="KW-0028">Amino-acid biosynthesis</keyword>
<keyword id="KW-0368">Histidine biosynthesis</keyword>
<keyword id="KW-0378">Hydrolase</keyword>
<keyword id="KW-0486">Methionine biosynthesis</keyword>
<keyword id="KW-0511">Multifunctional enzyme</keyword>
<keyword id="KW-0521">NADP</keyword>
<keyword id="KW-0554">One-carbon metabolism</keyword>
<keyword id="KW-0560">Oxidoreductase</keyword>
<keyword id="KW-0658">Purine biosynthesis</keyword>
<protein>
    <recommendedName>
        <fullName evidence="1">Bifunctional protein FolD</fullName>
    </recommendedName>
    <domain>
        <recommendedName>
            <fullName evidence="1">Methylenetetrahydrofolate dehydrogenase</fullName>
            <ecNumber evidence="1">1.5.1.5</ecNumber>
        </recommendedName>
    </domain>
    <domain>
        <recommendedName>
            <fullName evidence="1">Methenyltetrahydrofolate cyclohydrolase</fullName>
            <ecNumber evidence="1">3.5.4.9</ecNumber>
        </recommendedName>
    </domain>
</protein>
<reference key="1">
    <citation type="journal article" date="2008" name="J. Biotechnol.">
        <title>The genome of Xanthomonas campestris pv. campestris B100 and its use for the reconstruction of metabolic pathways involved in xanthan biosynthesis.</title>
        <authorList>
            <person name="Vorhoelter F.-J."/>
            <person name="Schneiker S."/>
            <person name="Goesmann A."/>
            <person name="Krause L."/>
            <person name="Bekel T."/>
            <person name="Kaiser O."/>
            <person name="Linke B."/>
            <person name="Patschkowski T."/>
            <person name="Rueckert C."/>
            <person name="Schmid J."/>
            <person name="Sidhu V.K."/>
            <person name="Sieber V."/>
            <person name="Tauch A."/>
            <person name="Watt S.A."/>
            <person name="Weisshaar B."/>
            <person name="Becker A."/>
            <person name="Niehaus K."/>
            <person name="Puehler A."/>
        </authorList>
    </citation>
    <scope>NUCLEOTIDE SEQUENCE [LARGE SCALE GENOMIC DNA]</scope>
    <source>
        <strain>B100</strain>
    </source>
</reference>